<keyword id="KW-0028">Amino-acid biosynthesis</keyword>
<keyword id="KW-0057">Aromatic amino acid biosynthesis</keyword>
<keyword id="KW-0150">Chloroplast</keyword>
<keyword id="KW-0456">Lyase</keyword>
<keyword id="KW-0584">Phenylalanine biosynthesis</keyword>
<keyword id="KW-0934">Plastid</keyword>
<keyword id="KW-1185">Reference proteome</keyword>
<keyword id="KW-0809">Transit peptide</keyword>
<evidence type="ECO:0000255" key="1"/>
<evidence type="ECO:0000255" key="2">
    <source>
        <dbReference type="PROSITE-ProRule" id="PRU00517"/>
    </source>
</evidence>
<evidence type="ECO:0000255" key="3">
    <source>
        <dbReference type="PROSITE-ProRule" id="PRU01007"/>
    </source>
</evidence>
<evidence type="ECO:0000256" key="4">
    <source>
        <dbReference type="SAM" id="MobiDB-lite"/>
    </source>
</evidence>
<evidence type="ECO:0000269" key="5">
    <source>
    </source>
</evidence>
<evidence type="ECO:0000269" key="6">
    <source>
    </source>
</evidence>
<evidence type="ECO:0000269" key="7">
    <source>
    </source>
</evidence>
<evidence type="ECO:0000303" key="8">
    <source>
    </source>
</evidence>
<evidence type="ECO:0000303" key="9">
    <source>
    </source>
</evidence>
<evidence type="ECO:0000305" key="10"/>
<evidence type="ECO:0000305" key="11">
    <source>
    </source>
</evidence>
<evidence type="ECO:0000312" key="12">
    <source>
        <dbReference type="Araport" id="AT2G27820"/>
    </source>
</evidence>
<evidence type="ECO:0000312" key="13">
    <source>
        <dbReference type="EMBL" id="AAC73018.1"/>
    </source>
</evidence>
<organism>
    <name type="scientific">Arabidopsis thaliana</name>
    <name type="common">Mouse-ear cress</name>
    <dbReference type="NCBI Taxonomy" id="3702"/>
    <lineage>
        <taxon>Eukaryota</taxon>
        <taxon>Viridiplantae</taxon>
        <taxon>Streptophyta</taxon>
        <taxon>Embryophyta</taxon>
        <taxon>Tracheophyta</taxon>
        <taxon>Spermatophyta</taxon>
        <taxon>Magnoliopsida</taxon>
        <taxon>eudicotyledons</taxon>
        <taxon>Gunneridae</taxon>
        <taxon>Pentapetalae</taxon>
        <taxon>rosids</taxon>
        <taxon>malvids</taxon>
        <taxon>Brassicales</taxon>
        <taxon>Brassicaceae</taxon>
        <taxon>Camelineae</taxon>
        <taxon>Arabidopsis</taxon>
    </lineage>
</organism>
<feature type="transit peptide" description="Chloroplast" evidence="1">
    <location>
        <begin position="1"/>
        <end position="24"/>
    </location>
</feature>
<feature type="chain" id="PRO_0000373792" description="Arogenate dehydratase 3, chloroplastic">
    <location>
        <begin position="25"/>
        <end position="424"/>
    </location>
</feature>
<feature type="domain" description="Prephenate dehydratase" evidence="2">
    <location>
        <begin position="122"/>
        <end position="299"/>
    </location>
</feature>
<feature type="domain" description="ACT" evidence="3">
    <location>
        <begin position="313"/>
        <end position="404"/>
    </location>
</feature>
<feature type="region of interest" description="Disordered" evidence="4">
    <location>
        <begin position="57"/>
        <end position="77"/>
    </location>
</feature>
<feature type="compositionally biased region" description="Low complexity" evidence="4">
    <location>
        <begin position="57"/>
        <end position="71"/>
    </location>
</feature>
<feature type="sequence conflict" description="In Ref. 4; AAM65232." evidence="10" ref="4">
    <original>I</original>
    <variation>M</variation>
    <location>
        <position position="206"/>
    </location>
</feature>
<sequence>MRTLLPSHTPATVTTAARRRHVIHCAGKRSDSFSINSSSSDWQSSCAILSSKVNSQEQSESLSSNSNGSSSYHVSAVNGHNNGAGVSDLNLVPFNNNQSIQSKKPLSISDLSPAPMHGSNLRVAYQGVPGAYSEAAAGKAYPNCQAIPCDQFEVAFQAVELWIADRAVLPVENSLGGSIHRNYDLLLRHRLHIVGEVQLPVHHCLIALPGVRKEFLTRVISHPQGLAQCEHTLTKLGLNVAREAVDDTAGAAEFIAANNIRDTAAIASARAAEIYGLEILEDGIQDDASNVTRFVMLAREPIIPRTDRPFKTSIVFAHEKGTCVLFKVLSAFAFRNISLTKIESRPNHNVPIRLVDEANVGTAKHFEYMFYIDFEASMAESRAQNALSEVQEFTSFLRVLGSYPMDMTSWSPSSSSSSSSTFSL</sequence>
<protein>
    <recommendedName>
        <fullName evidence="9">Arogenate dehydratase 3, chloroplastic</fullName>
        <shortName evidence="9">AtADT3</shortName>
        <ecNumber evidence="6">4.2.1.91</ecNumber>
    </recommendedName>
    <alternativeName>
        <fullName evidence="10">Prephenate dehydratase 1</fullName>
        <shortName evidence="10">AtPDT1</shortName>
    </alternativeName>
</protein>
<dbReference type="EC" id="4.2.1.91" evidence="6"/>
<dbReference type="EMBL" id="DQ411464">
    <property type="protein sequence ID" value="ABD67750.1"/>
    <property type="molecule type" value="mRNA"/>
</dbReference>
<dbReference type="EMBL" id="AC005824">
    <property type="protein sequence ID" value="AAC73018.1"/>
    <property type="molecule type" value="Genomic_DNA"/>
</dbReference>
<dbReference type="EMBL" id="CP002685">
    <property type="protein sequence ID" value="AEC08050.1"/>
    <property type="molecule type" value="Genomic_DNA"/>
</dbReference>
<dbReference type="EMBL" id="AY087695">
    <property type="protein sequence ID" value="AAM65232.1"/>
    <property type="molecule type" value="mRNA"/>
</dbReference>
<dbReference type="EMBL" id="BT025989">
    <property type="protein sequence ID" value="ABG25078.1"/>
    <property type="molecule type" value="mRNA"/>
</dbReference>
<dbReference type="EMBL" id="AK229426">
    <property type="protein sequence ID" value="BAF01286.1"/>
    <property type="molecule type" value="mRNA"/>
</dbReference>
<dbReference type="PIR" id="D84677">
    <property type="entry name" value="D84677"/>
</dbReference>
<dbReference type="RefSeq" id="NP_180350.1">
    <property type="nucleotide sequence ID" value="NM_128342.3"/>
</dbReference>
<dbReference type="SMR" id="Q9ZUY3"/>
<dbReference type="BioGRID" id="2679">
    <property type="interactions" value="1"/>
</dbReference>
<dbReference type="FunCoup" id="Q9ZUY3">
    <property type="interactions" value="342"/>
</dbReference>
<dbReference type="STRING" id="3702.Q9ZUY3"/>
<dbReference type="iPTMnet" id="Q9ZUY3"/>
<dbReference type="PaxDb" id="3702-AT2G27820.1"/>
<dbReference type="ProteomicsDB" id="246999"/>
<dbReference type="EnsemblPlants" id="AT2G27820.1">
    <property type="protein sequence ID" value="AT2G27820.1"/>
    <property type="gene ID" value="AT2G27820"/>
</dbReference>
<dbReference type="GeneID" id="817329"/>
<dbReference type="Gramene" id="AT2G27820.1">
    <property type="protein sequence ID" value="AT2G27820.1"/>
    <property type="gene ID" value="AT2G27820"/>
</dbReference>
<dbReference type="KEGG" id="ath:AT2G27820"/>
<dbReference type="Araport" id="AT2G27820"/>
<dbReference type="TAIR" id="AT2G27820">
    <property type="gene designation" value="PD1"/>
</dbReference>
<dbReference type="eggNOG" id="KOG2797">
    <property type="taxonomic scope" value="Eukaryota"/>
</dbReference>
<dbReference type="HOGENOM" id="CLU_035008_4_1_1"/>
<dbReference type="InParanoid" id="Q9ZUY3"/>
<dbReference type="OMA" id="RHVIHCA"/>
<dbReference type="PhylomeDB" id="Q9ZUY3"/>
<dbReference type="BioCyc" id="ARA:AT2G27820-MONOMER"/>
<dbReference type="BRENDA" id="4.2.1.51">
    <property type="organism ID" value="399"/>
</dbReference>
<dbReference type="BRENDA" id="4.2.1.91">
    <property type="organism ID" value="399"/>
</dbReference>
<dbReference type="SABIO-RK" id="Q9ZUY3"/>
<dbReference type="UniPathway" id="UPA00121">
    <property type="reaction ID" value="UER00344"/>
</dbReference>
<dbReference type="PRO" id="PR:Q9ZUY3"/>
<dbReference type="Proteomes" id="UP000006548">
    <property type="component" value="Chromosome 2"/>
</dbReference>
<dbReference type="ExpressionAtlas" id="Q9ZUY3">
    <property type="expression patterns" value="baseline and differential"/>
</dbReference>
<dbReference type="GO" id="GO:0009507">
    <property type="term" value="C:chloroplast"/>
    <property type="evidence" value="ECO:0000314"/>
    <property type="project" value="TAIR"/>
</dbReference>
<dbReference type="GO" id="GO:0009570">
    <property type="term" value="C:chloroplast stroma"/>
    <property type="evidence" value="ECO:0007669"/>
    <property type="project" value="UniProtKB-SubCell"/>
</dbReference>
<dbReference type="GO" id="GO:0005829">
    <property type="term" value="C:cytosol"/>
    <property type="evidence" value="ECO:0000315"/>
    <property type="project" value="TAIR"/>
</dbReference>
<dbReference type="GO" id="GO:0047769">
    <property type="term" value="F:arogenate dehydratase activity"/>
    <property type="evidence" value="ECO:0000314"/>
    <property type="project" value="TAIR"/>
</dbReference>
<dbReference type="GO" id="GO:0004664">
    <property type="term" value="F:prephenate dehydratase activity"/>
    <property type="evidence" value="ECO:0007669"/>
    <property type="project" value="InterPro"/>
</dbReference>
<dbReference type="GO" id="GO:0009094">
    <property type="term" value="P:L-phenylalanine biosynthetic process"/>
    <property type="evidence" value="ECO:0000315"/>
    <property type="project" value="TAIR"/>
</dbReference>
<dbReference type="GO" id="GO:0010244">
    <property type="term" value="P:response to low fluence blue light stimulus by blue low-fluence system"/>
    <property type="evidence" value="ECO:0000315"/>
    <property type="project" value="TAIR"/>
</dbReference>
<dbReference type="GO" id="GO:0006571">
    <property type="term" value="P:tyrosine biosynthetic process"/>
    <property type="evidence" value="ECO:0000315"/>
    <property type="project" value="TAIR"/>
</dbReference>
<dbReference type="CDD" id="cd04905">
    <property type="entry name" value="ACT_CM-PDT"/>
    <property type="match status" value="1"/>
</dbReference>
<dbReference type="CDD" id="cd13631">
    <property type="entry name" value="PBP2_Ct-PDT_like"/>
    <property type="match status" value="1"/>
</dbReference>
<dbReference type="FunFam" id="3.30.70.260:FF:000019">
    <property type="entry name" value="Arogenate dehydratase"/>
    <property type="match status" value="1"/>
</dbReference>
<dbReference type="FunFam" id="3.40.190.10:FF:000028">
    <property type="entry name" value="Arogenate dehydratase"/>
    <property type="match status" value="1"/>
</dbReference>
<dbReference type="FunFam" id="3.40.190.10:FF:000031">
    <property type="entry name" value="Arogenate dehydratase"/>
    <property type="match status" value="1"/>
</dbReference>
<dbReference type="Gene3D" id="3.30.70.260">
    <property type="match status" value="1"/>
</dbReference>
<dbReference type="Gene3D" id="3.40.190.10">
    <property type="entry name" value="Periplasmic binding protein-like II"/>
    <property type="match status" value="2"/>
</dbReference>
<dbReference type="InterPro" id="IPR045865">
    <property type="entry name" value="ACT-like_dom_sf"/>
</dbReference>
<dbReference type="InterPro" id="IPR002912">
    <property type="entry name" value="ACT_dom"/>
</dbReference>
<dbReference type="InterPro" id="IPR001086">
    <property type="entry name" value="Preph_deHydtase"/>
</dbReference>
<dbReference type="InterPro" id="IPR018528">
    <property type="entry name" value="Preph_deHydtase_CS"/>
</dbReference>
<dbReference type="PANTHER" id="PTHR21022:SF35">
    <property type="entry name" value="AROGENATE DEHYDRATASE 3, CHLOROPLASTIC"/>
    <property type="match status" value="1"/>
</dbReference>
<dbReference type="PANTHER" id="PTHR21022">
    <property type="entry name" value="PREPHENATE DEHYDRATASE P PROTEIN"/>
    <property type="match status" value="1"/>
</dbReference>
<dbReference type="Pfam" id="PF00800">
    <property type="entry name" value="PDT"/>
    <property type="match status" value="1"/>
</dbReference>
<dbReference type="SUPFAM" id="SSF55021">
    <property type="entry name" value="ACT-like"/>
    <property type="match status" value="1"/>
</dbReference>
<dbReference type="SUPFAM" id="SSF53850">
    <property type="entry name" value="Periplasmic binding protein-like II"/>
    <property type="match status" value="1"/>
</dbReference>
<dbReference type="PROSITE" id="PS51671">
    <property type="entry name" value="ACT"/>
    <property type="match status" value="1"/>
</dbReference>
<dbReference type="PROSITE" id="PS00857">
    <property type="entry name" value="PREPHENATE_DEHYDR_1"/>
    <property type="match status" value="1"/>
</dbReference>
<dbReference type="PROSITE" id="PS00858">
    <property type="entry name" value="PREPHENATE_DEHYDR_2"/>
    <property type="match status" value="1"/>
</dbReference>
<dbReference type="PROSITE" id="PS51171">
    <property type="entry name" value="PREPHENATE_DEHYDR_3"/>
    <property type="match status" value="1"/>
</dbReference>
<proteinExistence type="evidence at protein level"/>
<gene>
    <name evidence="9" type="primary">ADT3</name>
    <name evidence="8" type="synonym">PD1</name>
    <name evidence="10" type="synonym">PDT1</name>
    <name evidence="12" type="ordered locus">At2g27820</name>
    <name evidence="13" type="ORF">F15K20.8</name>
</gene>
<reference key="1">
    <citation type="submission" date="2006-02" db="EMBL/GenBank/DDBJ databases">
        <authorList>
            <person name="Matringe M."/>
            <person name="Grisollet D."/>
            <person name="Rippert P."/>
        </authorList>
    </citation>
    <scope>NUCLEOTIDE SEQUENCE [MRNA]</scope>
    <source>
        <strain>cv. Columbia</strain>
    </source>
</reference>
<reference key="2">
    <citation type="journal article" date="1999" name="Nature">
        <title>Sequence and analysis of chromosome 2 of the plant Arabidopsis thaliana.</title>
        <authorList>
            <person name="Lin X."/>
            <person name="Kaul S."/>
            <person name="Rounsley S.D."/>
            <person name="Shea T.P."/>
            <person name="Benito M.-I."/>
            <person name="Town C.D."/>
            <person name="Fujii C.Y."/>
            <person name="Mason T.M."/>
            <person name="Bowman C.L."/>
            <person name="Barnstead M.E."/>
            <person name="Feldblyum T.V."/>
            <person name="Buell C.R."/>
            <person name="Ketchum K.A."/>
            <person name="Lee J.J."/>
            <person name="Ronning C.M."/>
            <person name="Koo H.L."/>
            <person name="Moffat K.S."/>
            <person name="Cronin L.A."/>
            <person name="Shen M."/>
            <person name="Pai G."/>
            <person name="Van Aken S."/>
            <person name="Umayam L."/>
            <person name="Tallon L.J."/>
            <person name="Gill J.E."/>
            <person name="Adams M.D."/>
            <person name="Carrera A.J."/>
            <person name="Creasy T.H."/>
            <person name="Goodman H.M."/>
            <person name="Somerville C.R."/>
            <person name="Copenhaver G.P."/>
            <person name="Preuss D."/>
            <person name="Nierman W.C."/>
            <person name="White O."/>
            <person name="Eisen J.A."/>
            <person name="Salzberg S.L."/>
            <person name="Fraser C.M."/>
            <person name="Venter J.C."/>
        </authorList>
    </citation>
    <scope>NUCLEOTIDE SEQUENCE [LARGE SCALE GENOMIC DNA]</scope>
    <source>
        <strain>cv. Columbia</strain>
    </source>
</reference>
<reference key="3">
    <citation type="journal article" date="2017" name="Plant J.">
        <title>Araport11: a complete reannotation of the Arabidopsis thaliana reference genome.</title>
        <authorList>
            <person name="Cheng C.Y."/>
            <person name="Krishnakumar V."/>
            <person name="Chan A.P."/>
            <person name="Thibaud-Nissen F."/>
            <person name="Schobel S."/>
            <person name="Town C.D."/>
        </authorList>
    </citation>
    <scope>GENOME REANNOTATION</scope>
    <source>
        <strain>cv. Columbia</strain>
    </source>
</reference>
<reference key="4">
    <citation type="submission" date="2002-03" db="EMBL/GenBank/DDBJ databases">
        <title>Full-length cDNA from Arabidopsis thaliana.</title>
        <authorList>
            <person name="Brover V.V."/>
            <person name="Troukhan M.E."/>
            <person name="Alexandrov N.A."/>
            <person name="Lu Y.-P."/>
            <person name="Flavell R.B."/>
            <person name="Feldmann K.A."/>
        </authorList>
    </citation>
    <scope>NUCLEOTIDE SEQUENCE [LARGE SCALE MRNA]</scope>
</reference>
<reference key="5">
    <citation type="submission" date="2006-06" db="EMBL/GenBank/DDBJ databases">
        <title>Arabidopsis ORF clones.</title>
        <authorList>
            <person name="Shinn P."/>
            <person name="Chen H."/>
            <person name="Kim C.J."/>
            <person name="Quinitio C."/>
            <person name="Ecker J.R."/>
        </authorList>
    </citation>
    <scope>NUCLEOTIDE SEQUENCE [LARGE SCALE MRNA]</scope>
    <source>
        <strain>cv. Columbia</strain>
    </source>
</reference>
<reference key="6">
    <citation type="submission" date="2006-07" db="EMBL/GenBank/DDBJ databases">
        <title>Large-scale analysis of RIKEN Arabidopsis full-length (RAFL) cDNAs.</title>
        <authorList>
            <person name="Totoki Y."/>
            <person name="Seki M."/>
            <person name="Ishida J."/>
            <person name="Nakajima M."/>
            <person name="Enju A."/>
            <person name="Kamiya A."/>
            <person name="Narusaka M."/>
            <person name="Shin-i T."/>
            <person name="Nakagawa M."/>
            <person name="Sakamoto N."/>
            <person name="Oishi K."/>
            <person name="Kohara Y."/>
            <person name="Kobayashi M."/>
            <person name="Toyoda A."/>
            <person name="Sakaki Y."/>
            <person name="Sakurai T."/>
            <person name="Iida K."/>
            <person name="Akiyama K."/>
            <person name="Satou M."/>
            <person name="Toyoda T."/>
            <person name="Konagaya A."/>
            <person name="Carninci P."/>
            <person name="Kawai J."/>
            <person name="Hayashizaki Y."/>
            <person name="Shinozaki K."/>
        </authorList>
    </citation>
    <scope>NUCLEOTIDE SEQUENCE [LARGE SCALE MRNA] OF 179-424</scope>
    <source>
        <strain>cv. Columbia</strain>
    </source>
</reference>
<reference key="7">
    <citation type="journal article" date="2006" name="Plant Physiol.">
        <title>G-protein-coupled receptor 1, G-protein Galpha-subunit 1, and prephenate dehydratase 1 are required for blue light-induced production of phenylalanine in etiolated Arabidopsis.</title>
        <authorList>
            <person name="Warpeha K.M."/>
            <person name="Lateef S.S."/>
            <person name="Lapik Y."/>
            <person name="Anderson M."/>
            <person name="Lee B.-S."/>
            <person name="Kaufman L.S."/>
        </authorList>
    </citation>
    <scope>SUBCELLULAR LOCATION</scope>
    <scope>FUNCTION</scope>
    <scope>DISRUPTION PHENOTYPE</scope>
    <scope>INTERACTION WITH GPA1</scope>
</reference>
<reference key="8">
    <citation type="journal article" date="2007" name="J. Biol. Chem.">
        <title>Phenylalanine biosynthesis in Arabidopsis thaliana. Identification and characterization of arogenate dehydratases.</title>
        <authorList>
            <person name="Cho M.-H."/>
            <person name="Corea O.R.A."/>
            <person name="Yang H."/>
            <person name="Bedgar D.L."/>
            <person name="Laskar D.D."/>
            <person name="Anterola A.M."/>
            <person name="Moog-Anterola F.A."/>
            <person name="Hood R.L."/>
            <person name="Kohalmi S.E."/>
            <person name="Bernards M.A."/>
            <person name="Kang C."/>
            <person name="Davin L.B."/>
            <person name="Lewis N.G."/>
        </authorList>
    </citation>
    <scope>FUNCTION</scope>
    <scope>CATALYTIC ACTIVITY</scope>
    <scope>TISSUE SPECIFICITY</scope>
    <scope>BIOPHYSICOCHEMICAL PROPERTIES</scope>
</reference>
<reference key="9">
    <citation type="journal article" date="2009" name="Plant Physiol.">
        <title>Tyrosine and phenylalanine are synthesized within the plastids in Arabidopsis.</title>
        <authorList>
            <person name="Rippert P."/>
            <person name="Puyaubert J."/>
            <person name="Grisollet D."/>
            <person name="Derrier L."/>
            <person name="Matringe M."/>
        </authorList>
    </citation>
    <scope>SUBCELLULAR LOCATION</scope>
</reference>
<comment type="function">
    <text evidence="5 6">Converts the prephenate produced from the shikimate-chorismate pathway into phenylalanine (PubMed:17726025). Together with GCR1 and GPA1, required for blue light-mediated synthesis of phenylpyruvate and subsequently of phenylalanine (Phe), in etiolated seedlings (PubMed:16415218).</text>
</comment>
<comment type="catalytic activity">
    <reaction evidence="6">
        <text>L-arogenate + H(+) = L-phenylalanine + CO2 + H2O</text>
        <dbReference type="Rhea" id="RHEA:12536"/>
        <dbReference type="ChEBI" id="CHEBI:15377"/>
        <dbReference type="ChEBI" id="CHEBI:15378"/>
        <dbReference type="ChEBI" id="CHEBI:16526"/>
        <dbReference type="ChEBI" id="CHEBI:58095"/>
        <dbReference type="ChEBI" id="CHEBI:58180"/>
        <dbReference type="EC" id="4.2.1.91"/>
    </reaction>
    <physiologicalReaction direction="left-to-right" evidence="6">
        <dbReference type="Rhea" id="RHEA:12537"/>
    </physiologicalReaction>
</comment>
<comment type="biophysicochemical properties">
    <kinetics>
        <KM evidence="6">0.43 mM for arogenate</KM>
        <Vmax evidence="6">5.17 pmol/sec/ug enzyme with arogenate as substrate</Vmax>
    </kinetics>
</comment>
<comment type="pathway">
    <text evidence="10">Amino-acid biosynthesis; L-phenylalanine biosynthesis; L-phenylalanine from L-arogenate: step 1/1.</text>
</comment>
<comment type="subunit">
    <text>May interact with GPA1.</text>
</comment>
<comment type="subcellular location">
    <subcellularLocation>
        <location evidence="5 7">Plastid</location>
        <location evidence="5 7">Chloroplast stroma</location>
    </subcellularLocation>
</comment>
<comment type="tissue specificity">
    <text evidence="6">Expressed in roots, leaves, stems, flowers and siliques.</text>
</comment>
<comment type="disruption phenotype">
    <text evidence="5">Lack of Phe and Tyr accumulation after blue light irradiation of etiolated seedlings.</text>
</comment>
<comment type="miscellaneous">
    <text evidence="6">Has no detectable prehenate dehydratase activity.</text>
</comment>
<comment type="caution">
    <text evidence="11">Was reported to be a cytosolic prephenate dehydratase interacting with a G-protein alpha-subunit.</text>
</comment>
<name>AROD3_ARATH</name>
<accession>Q9ZUY3</accession>
<accession>Q0WNL3</accession>
<accession>Q8LAP1</accession>